<reference key="1">
    <citation type="journal article" date="2004" name="Nat. Genet.">
        <title>Evidence in the Legionella pneumophila genome for exploitation of host cell functions and high genome plasticity.</title>
        <authorList>
            <person name="Cazalet C."/>
            <person name="Rusniok C."/>
            <person name="Brueggemann H."/>
            <person name="Zidane N."/>
            <person name="Magnier A."/>
            <person name="Ma L."/>
            <person name="Tichit M."/>
            <person name="Jarraud S."/>
            <person name="Bouchier C."/>
            <person name="Vandenesch F."/>
            <person name="Kunst F."/>
            <person name="Etienne J."/>
            <person name="Glaser P."/>
            <person name="Buchrieser C."/>
        </authorList>
    </citation>
    <scope>NUCLEOTIDE SEQUENCE [LARGE SCALE GENOMIC DNA]</scope>
    <source>
        <strain>Lens</strain>
    </source>
</reference>
<comment type="function">
    <text evidence="1">One of the primary rRNA binding proteins, it binds directly to 16S rRNA where it nucleates assembly of the head domain of the 30S subunit. Is located at the subunit interface close to the decoding center, probably blocks exit of the E-site tRNA.</text>
</comment>
<comment type="subunit">
    <text evidence="1">Part of the 30S ribosomal subunit. Contacts proteins S9 and S11.</text>
</comment>
<comment type="similarity">
    <text evidence="1">Belongs to the universal ribosomal protein uS7 family.</text>
</comment>
<keyword id="KW-0687">Ribonucleoprotein</keyword>
<keyword id="KW-0689">Ribosomal protein</keyword>
<keyword id="KW-0694">RNA-binding</keyword>
<keyword id="KW-0699">rRNA-binding</keyword>
<keyword id="KW-0820">tRNA-binding</keyword>
<feature type="chain" id="PRO_0000124281" description="Small ribosomal subunit protein uS7">
    <location>
        <begin position="1"/>
        <end position="175"/>
    </location>
</feature>
<evidence type="ECO:0000255" key="1">
    <source>
        <dbReference type="HAMAP-Rule" id="MF_00480"/>
    </source>
</evidence>
<evidence type="ECO:0000305" key="2"/>
<organism>
    <name type="scientific">Legionella pneumophila (strain Lens)</name>
    <dbReference type="NCBI Taxonomy" id="297245"/>
    <lineage>
        <taxon>Bacteria</taxon>
        <taxon>Pseudomonadati</taxon>
        <taxon>Pseudomonadota</taxon>
        <taxon>Gammaproteobacteria</taxon>
        <taxon>Legionellales</taxon>
        <taxon>Legionellaceae</taxon>
        <taxon>Legionella</taxon>
    </lineage>
</organism>
<sequence>MPRRREVPKREILPDPKHHSELLAKFINVLMVSGKKSIAEKITYGALSVMEERVKKIKKNEEDGSETGSSGSAGAVLRYFEEALDNVRPSVEVRSRRVGGATYQVPVEVRHDRSIALGMRWIVQAARTRGEKGMMLRLAGELMDAYENKGSAVKKREDTHKMAKANQAFAHFRWN</sequence>
<accession>Q5WZL6</accession>
<proteinExistence type="inferred from homology"/>
<dbReference type="EMBL" id="CR628337">
    <property type="protein sequence ID" value="CAH14596.1"/>
    <property type="molecule type" value="Genomic_DNA"/>
</dbReference>
<dbReference type="RefSeq" id="WP_010946075.1">
    <property type="nucleotide sequence ID" value="NC_006369.1"/>
</dbReference>
<dbReference type="SMR" id="Q5WZL6"/>
<dbReference type="GeneID" id="57034328"/>
<dbReference type="KEGG" id="lpf:lpl0365"/>
<dbReference type="LegioList" id="lpl0365"/>
<dbReference type="HOGENOM" id="CLU_072226_1_1_6"/>
<dbReference type="Proteomes" id="UP000002517">
    <property type="component" value="Chromosome"/>
</dbReference>
<dbReference type="GO" id="GO:0015935">
    <property type="term" value="C:small ribosomal subunit"/>
    <property type="evidence" value="ECO:0007669"/>
    <property type="project" value="InterPro"/>
</dbReference>
<dbReference type="GO" id="GO:0019843">
    <property type="term" value="F:rRNA binding"/>
    <property type="evidence" value="ECO:0007669"/>
    <property type="project" value="UniProtKB-UniRule"/>
</dbReference>
<dbReference type="GO" id="GO:0003735">
    <property type="term" value="F:structural constituent of ribosome"/>
    <property type="evidence" value="ECO:0007669"/>
    <property type="project" value="InterPro"/>
</dbReference>
<dbReference type="GO" id="GO:0000049">
    <property type="term" value="F:tRNA binding"/>
    <property type="evidence" value="ECO:0007669"/>
    <property type="project" value="UniProtKB-UniRule"/>
</dbReference>
<dbReference type="GO" id="GO:0006412">
    <property type="term" value="P:translation"/>
    <property type="evidence" value="ECO:0007669"/>
    <property type="project" value="UniProtKB-UniRule"/>
</dbReference>
<dbReference type="CDD" id="cd14869">
    <property type="entry name" value="uS7_Bacteria"/>
    <property type="match status" value="1"/>
</dbReference>
<dbReference type="FunFam" id="1.10.455.10:FF:000001">
    <property type="entry name" value="30S ribosomal protein S7"/>
    <property type="match status" value="1"/>
</dbReference>
<dbReference type="Gene3D" id="1.10.455.10">
    <property type="entry name" value="Ribosomal protein S7 domain"/>
    <property type="match status" value="1"/>
</dbReference>
<dbReference type="HAMAP" id="MF_00480_B">
    <property type="entry name" value="Ribosomal_uS7_B"/>
    <property type="match status" value="1"/>
</dbReference>
<dbReference type="InterPro" id="IPR000235">
    <property type="entry name" value="Ribosomal_uS7"/>
</dbReference>
<dbReference type="InterPro" id="IPR005717">
    <property type="entry name" value="Ribosomal_uS7_bac/org-type"/>
</dbReference>
<dbReference type="InterPro" id="IPR023798">
    <property type="entry name" value="Ribosomal_uS7_dom"/>
</dbReference>
<dbReference type="InterPro" id="IPR036823">
    <property type="entry name" value="Ribosomal_uS7_dom_sf"/>
</dbReference>
<dbReference type="NCBIfam" id="TIGR01029">
    <property type="entry name" value="rpsG_bact"/>
    <property type="match status" value="1"/>
</dbReference>
<dbReference type="PANTHER" id="PTHR11205">
    <property type="entry name" value="RIBOSOMAL PROTEIN S7"/>
    <property type="match status" value="1"/>
</dbReference>
<dbReference type="Pfam" id="PF00177">
    <property type="entry name" value="Ribosomal_S7"/>
    <property type="match status" value="1"/>
</dbReference>
<dbReference type="PIRSF" id="PIRSF002122">
    <property type="entry name" value="RPS7p_RPS7a_RPS5e_RPS7o"/>
    <property type="match status" value="1"/>
</dbReference>
<dbReference type="SUPFAM" id="SSF47973">
    <property type="entry name" value="Ribosomal protein S7"/>
    <property type="match status" value="1"/>
</dbReference>
<protein>
    <recommendedName>
        <fullName evidence="1">Small ribosomal subunit protein uS7</fullName>
    </recommendedName>
    <alternativeName>
        <fullName evidence="2">30S ribosomal protein S7</fullName>
    </alternativeName>
</protein>
<name>RS7_LEGPL</name>
<gene>
    <name evidence="1" type="primary">rpsG</name>
    <name type="ordered locus">lpl0365</name>
</gene>